<protein>
    <recommendedName>
        <fullName evidence="2">Cell division protein FtsL</fullName>
    </recommendedName>
</protein>
<evidence type="ECO:0000255" key="1"/>
<evidence type="ECO:0000255" key="2">
    <source>
        <dbReference type="HAMAP-Rule" id="MF_00910"/>
    </source>
</evidence>
<evidence type="ECO:0000269" key="3">
    <source>
    </source>
</evidence>
<evidence type="ECO:0000269" key="4">
    <source>
    </source>
</evidence>
<evidence type="ECO:0000269" key="5">
    <source>
    </source>
</evidence>
<evidence type="ECO:0000269" key="6">
    <source>
    </source>
</evidence>
<evidence type="ECO:0000269" key="7">
    <source>
    </source>
</evidence>
<evidence type="ECO:0000269" key="8">
    <source>
    </source>
</evidence>
<evidence type="ECO:0000269" key="9">
    <source>
    </source>
</evidence>
<evidence type="ECO:0000269" key="10">
    <source>
    </source>
</evidence>
<evidence type="ECO:0000269" key="11">
    <source>
    </source>
</evidence>
<evidence type="ECO:0000269" key="12">
    <source>
    </source>
</evidence>
<evidence type="ECO:0000269" key="13">
    <source>
    </source>
</evidence>
<evidence type="ECO:0007829" key="14">
    <source>
        <dbReference type="PDB" id="8HHF"/>
    </source>
</evidence>
<evidence type="ECO:0007829" key="15">
    <source>
        <dbReference type="PDB" id="8HHH"/>
    </source>
</evidence>
<name>FTSL_ECOLI</name>
<accession>P0AEN4</accession>
<accession>P22187</accession>
<accession>Q8KMX6</accession>
<keyword id="KW-0002">3D-structure</keyword>
<keyword id="KW-0131">Cell cycle</keyword>
<keyword id="KW-0132">Cell division</keyword>
<keyword id="KW-0997">Cell inner membrane</keyword>
<keyword id="KW-1003">Cell membrane</keyword>
<keyword id="KW-0175">Coiled coil</keyword>
<keyword id="KW-0472">Membrane</keyword>
<keyword id="KW-1185">Reference proteome</keyword>
<keyword id="KW-0812">Transmembrane</keyword>
<keyword id="KW-1133">Transmembrane helix</keyword>
<reference key="1">
    <citation type="journal article" date="1992" name="J. Bacteriol.">
        <title>FtsL, an essential cytoplasmic membrane protein involved in cell division in Escherichia coli.</title>
        <authorList>
            <person name="Guzman L.-M."/>
            <person name="Barondess J.J."/>
            <person name="Beckwith J."/>
        </authorList>
    </citation>
    <scope>NUCLEOTIDE SEQUENCE [GENOMIC DNA]</scope>
    <scope>SUBCELLULAR LOCATION</scope>
    <scope>TOPOLOGY</scope>
    <scope>DISRUPTION PHENOTYPE</scope>
</reference>
<reference key="2">
    <citation type="journal article" date="1992" name="J. Bacteriol.">
        <title>Escherichia coli mraR gene involved in cell growth and division.</title>
        <authorList>
            <person name="Ueki M."/>
            <person name="Wachi M."/>
            <person name="Jung H.K."/>
            <person name="Ishino F."/>
            <person name="Matsuhashi M."/>
        </authorList>
    </citation>
    <scope>NUCLEOTIDE SEQUENCE [GENOMIC DNA]</scope>
</reference>
<reference key="3">
    <citation type="journal article" date="1994" name="Nucleic Acids Res.">
        <title>Systematic sequencing of the Escherichia coli genome: analysis of the 2.4-4.1 min (110,917-193,643 bp) region.</title>
        <authorList>
            <person name="Fujita N."/>
            <person name="Mori H."/>
            <person name="Yura T."/>
            <person name="Ishihama A."/>
        </authorList>
    </citation>
    <scope>NUCLEOTIDE SEQUENCE [LARGE SCALE GENOMIC DNA]</scope>
    <source>
        <strain>K12 / W3110 / ATCC 27325 / DSM 5911</strain>
    </source>
</reference>
<reference key="4">
    <citation type="journal article" date="1997" name="Science">
        <title>The complete genome sequence of Escherichia coli K-12.</title>
        <authorList>
            <person name="Blattner F.R."/>
            <person name="Plunkett G. III"/>
            <person name="Bloch C.A."/>
            <person name="Perna N.T."/>
            <person name="Burland V."/>
            <person name="Riley M."/>
            <person name="Collado-Vides J."/>
            <person name="Glasner J.D."/>
            <person name="Rode C.K."/>
            <person name="Mayhew G.F."/>
            <person name="Gregor J."/>
            <person name="Davis N.W."/>
            <person name="Kirkpatrick H.A."/>
            <person name="Goeden M.A."/>
            <person name="Rose D.J."/>
            <person name="Mau B."/>
            <person name="Shao Y."/>
        </authorList>
    </citation>
    <scope>NUCLEOTIDE SEQUENCE [LARGE SCALE GENOMIC DNA]</scope>
    <source>
        <strain>K12 / MG1655 / ATCC 47076</strain>
    </source>
</reference>
<reference key="5">
    <citation type="journal article" date="2006" name="Mol. Syst. Biol.">
        <title>Highly accurate genome sequences of Escherichia coli K-12 strains MG1655 and W3110.</title>
        <authorList>
            <person name="Hayashi K."/>
            <person name="Morooka N."/>
            <person name="Yamamoto Y."/>
            <person name="Fujita K."/>
            <person name="Isono K."/>
            <person name="Choi S."/>
            <person name="Ohtsubo E."/>
            <person name="Baba T."/>
            <person name="Wanner B.L."/>
            <person name="Mori H."/>
            <person name="Horiuchi T."/>
        </authorList>
    </citation>
    <scope>NUCLEOTIDE SEQUENCE [LARGE SCALE GENOMIC DNA]</scope>
    <scope>SEQUENCE REVISION</scope>
    <source>
        <strain>K12 / W3110 / ATCC 27325 / DSM 5911</strain>
    </source>
</reference>
<reference key="6">
    <citation type="journal article" date="1983" name="Mol. Gen. Genet.">
        <title>On the process of cellular division in Escherichia coli: nucleotide sequence of the gene for penicillin-binding protein 3.</title>
        <authorList>
            <person name="Nakamura M."/>
            <person name="Maruyama I.N."/>
            <person name="Soma M."/>
            <person name="Kato J."/>
            <person name="Suzuki H."/>
            <person name="Horota Y."/>
        </authorList>
    </citation>
    <scope>PRELIMINARY NUCLEOTIDE SEQUENCE [GENOMIC DNA]</scope>
    <source>
        <strain>K12</strain>
    </source>
</reference>
<reference key="7">
    <citation type="journal article" date="1990" name="Nucleic Acids Res.">
        <title>Nucleotide sequence of the regulatory region of the gene pbpB of Escherichia coli.</title>
        <authorList>
            <person name="Gomez M.J."/>
            <person name="Fluoret B."/>
            <person name="van Heijenoort J."/>
            <person name="Ayala J.A."/>
        </authorList>
    </citation>
    <scope>NUCLEOTIDE SEQUENCE [GENOMIC DNA] OF 1-9</scope>
    <source>
        <strain>K12 / W3110 / ATCC 27325 / DSM 5911</strain>
    </source>
</reference>
<reference key="8">
    <citation type="journal article" date="1999" name="Mol. Microbiol.">
        <title>Localization of FtsL to the Escherichia coli septal ring.</title>
        <authorList>
            <person name="Ghigo J.M."/>
            <person name="Weiss D.S."/>
            <person name="Chen J.C."/>
            <person name="Yarrow J.C."/>
            <person name="Beckwith J."/>
        </authorList>
    </citation>
    <scope>SUBCELLULAR LOCATION</scope>
    <source>
        <strain>K12 / MC4100 / ATCC 35695 / DSM 6574</strain>
    </source>
</reference>
<reference key="9">
    <citation type="journal article" date="2000" name="J. Bacteriol.">
        <title>Cell division in Escherichia coli: role of FtsL domains in septal localization, function, and oligomerization.</title>
        <authorList>
            <person name="Ghigo J.M."/>
            <person name="Beckwith J."/>
        </authorList>
    </citation>
    <scope>FUNCTION</scope>
    <scope>SUBUNIT</scope>
    <scope>COILED-COIL DOMAIN</scope>
    <scope>MUTAGENESIS OF LEU-70 AND LEU-84</scope>
    <source>
        <strain>K12 / MC4100 / ATCC 35695 / DSM 6574</strain>
    </source>
</reference>
<reference key="10">
    <citation type="journal article" date="2001" name="Mol. Microbiol.">
        <title>FtsQ, FtsL and FtsI require FtsK, but not FtsN, for co-localization with FtsZ during Escherichia coli cell division.</title>
        <authorList>
            <person name="Chen J.C."/>
            <person name="Beckwith J."/>
        </authorList>
    </citation>
    <scope>SUBCELLULAR LOCATION</scope>
    <source>
        <strain>K12 / MC4100 / ATCC 35695 / DSM 6574</strain>
    </source>
</reference>
<reference key="11">
    <citation type="journal article" date="2002" name="J. Bacteriol.">
        <title>ZipA is required for recruitment of FtsK, FtsQ, FtsL, and FtsN to the septal ring in Escherichia coli.</title>
        <authorList>
            <person name="Hale C.A."/>
            <person name="de Boer P.A.J."/>
        </authorList>
    </citation>
    <scope>SUBCELLULAR LOCATION</scope>
</reference>
<reference key="12">
    <citation type="journal article" date="2004" name="Mol. Microbiol.">
        <title>A complex of the Escherichia coli cell division proteins FtsL, FtsB and FtsQ forms independently of its localization to the septal region.</title>
        <authorList>
            <person name="Buddelmeijer N."/>
            <person name="Beckwith J."/>
        </authorList>
    </citation>
    <scope>SUBUNIT</scope>
    <scope>SUBCELLULAR LOCATION</scope>
    <source>
        <strain>K12 / MC4100 / ATCC 35695 / DSM 6574</strain>
    </source>
</reference>
<reference key="13">
    <citation type="journal article" date="2005" name="J. Bacteriol.">
        <title>Interaction network among Escherichia coli membrane proteins involved in cell division as revealed by bacterial two-hybrid analysis.</title>
        <authorList>
            <person name="Karimova G."/>
            <person name="Dautin N."/>
            <person name="Ladant D."/>
        </authorList>
    </citation>
    <scope>INTERACTION WITH FTSB; FTSQ; FTSI; FTSN AND YMGF</scope>
    <source>
        <strain>K12</strain>
    </source>
</reference>
<reference key="14">
    <citation type="journal article" date="2009" name="J. Bacteriol.">
        <title>Divisome under construction: distinct domains of the small membrane protein FtsB are necessary for interaction with multiple cell division proteins.</title>
        <authorList>
            <person name="Gonzalez M.D."/>
            <person name="Beckwith J."/>
        </authorList>
    </citation>
    <scope>FUNCTION</scope>
    <scope>SUBUNIT</scope>
    <scope>INTERACTION WITH FTSB</scope>
    <source>
        <strain>K12 / MC4100 / ATCC 35695 / DSM 6574</strain>
    </source>
</reference>
<reference key="15">
    <citation type="journal article" date="2010" name="J. Bacteriol.">
        <title>Multiple interaction domains in FtsL, a protein component of the widely conserved bacterial FtsLBQ cell division complex.</title>
        <authorList>
            <person name="Gonzalez M.D."/>
            <person name="Akbay E.A."/>
            <person name="Boyd D."/>
            <person name="Beckwith J."/>
        </authorList>
    </citation>
    <scope>SUBUNIT</scope>
    <scope>COILED-COIL DOMAIN</scope>
    <scope>DOMAIN</scope>
    <source>
        <strain>K12 / MC4100 / ATCC 35695 / DSM 6574</strain>
    </source>
</reference>
<reference key="16">
    <citation type="journal article" date="2011" name="Biochem. Biophys. Res. Commun.">
        <title>Identification of a novel function for the FtsL cell division protein from Escherichia coli K12.</title>
        <authorList>
            <person name="Blencowe D.K."/>
            <person name="Al Jubori S."/>
            <person name="Morby A.P."/>
        </authorList>
    </citation>
    <scope>FUNCTION</scope>
</reference>
<reference key="17">
    <citation type="journal article" date="2011" name="BMC Struct. Biol.">
        <title>A model for the Escherichia coli FtsB/FtsL/FtsQ cell division complex.</title>
        <authorList>
            <person name="Villanelo F."/>
            <person name="Ordenes A."/>
            <person name="Brunet J."/>
            <person name="Lagos R."/>
            <person name="Monasterio O."/>
        </authorList>
    </citation>
    <scope>3D-STRUCTURE MODELING OF THE FTSB/FTSL/FTSQ COMPLEX</scope>
</reference>
<reference key="18">
    <citation type="journal article" date="2011" name="J. Bacteriol.">
        <title>Role of leucine zipper motifs in association of the Escherichia coli cell division proteins FtsL and FtsB.</title>
        <authorList>
            <person name="Robichon C."/>
            <person name="Karimova G."/>
            <person name="Beckwith J."/>
            <person name="Ladant D."/>
        </authorList>
    </citation>
    <scope>DOMAIN</scope>
    <scope>LEUCINE ZIPPER-LIKE MOTIF</scope>
</reference>
<proteinExistence type="evidence at protein level"/>
<dbReference type="EMBL" id="S49875">
    <property type="protein sequence ID" value="AAB24309.1"/>
    <property type="molecule type" value="Genomic_DNA"/>
</dbReference>
<dbReference type="EMBL" id="S49802">
    <property type="protein sequence ID" value="AAB24311.1"/>
    <property type="molecule type" value="Genomic_DNA"/>
</dbReference>
<dbReference type="EMBL" id="X55034">
    <property type="protein sequence ID" value="CAA38860.1"/>
    <property type="molecule type" value="Genomic_DNA"/>
</dbReference>
<dbReference type="EMBL" id="U00096">
    <property type="protein sequence ID" value="AAC73194.1"/>
    <property type="molecule type" value="Genomic_DNA"/>
</dbReference>
<dbReference type="EMBL" id="AP009048">
    <property type="protein sequence ID" value="BAB96651.2"/>
    <property type="molecule type" value="Genomic_DNA"/>
</dbReference>
<dbReference type="EMBL" id="K00137">
    <property type="protein sequence ID" value="AAA24299.1"/>
    <property type="molecule type" value="Genomic_DNA"/>
</dbReference>
<dbReference type="EMBL" id="X52063">
    <property type="protein sequence ID" value="CAA36285.1"/>
    <property type="molecule type" value="Genomic_DNA"/>
</dbReference>
<dbReference type="PIR" id="A45278">
    <property type="entry name" value="A45278"/>
</dbReference>
<dbReference type="RefSeq" id="NP_414625.1">
    <property type="nucleotide sequence ID" value="NC_000913.3"/>
</dbReference>
<dbReference type="RefSeq" id="WP_000625658.1">
    <property type="nucleotide sequence ID" value="NZ_STEB01000010.1"/>
</dbReference>
<dbReference type="PDB" id="8HHF">
    <property type="method" value="X-ray"/>
    <property type="resolution" value="3.04 A"/>
    <property type="chains" value="L=1-121"/>
</dbReference>
<dbReference type="PDB" id="8HHG">
    <property type="method" value="X-ray"/>
    <property type="resolution" value="3.10 A"/>
    <property type="chains" value="L=1-121"/>
</dbReference>
<dbReference type="PDB" id="8HHH">
    <property type="method" value="X-ray"/>
    <property type="resolution" value="3.30 A"/>
    <property type="chains" value="L=1-121"/>
</dbReference>
<dbReference type="PDBsum" id="8HHF"/>
<dbReference type="PDBsum" id="8HHG"/>
<dbReference type="PDBsum" id="8HHH"/>
<dbReference type="SASBDB" id="P0AEN4"/>
<dbReference type="SMR" id="P0AEN4"/>
<dbReference type="BioGRID" id="4261638">
    <property type="interactions" value="336"/>
</dbReference>
<dbReference type="BioGRID" id="849204">
    <property type="interactions" value="1"/>
</dbReference>
<dbReference type="ComplexPortal" id="CPX-3099">
    <property type="entry name" value="FtsQBL complex"/>
</dbReference>
<dbReference type="ComplexPortal" id="CPX-3299">
    <property type="entry name" value="FtsBL complex"/>
</dbReference>
<dbReference type="DIP" id="DIP-47987N"/>
<dbReference type="FunCoup" id="P0AEN4">
    <property type="interactions" value="157"/>
</dbReference>
<dbReference type="IntAct" id="P0AEN4">
    <property type="interactions" value="17"/>
</dbReference>
<dbReference type="MINT" id="P0AEN4"/>
<dbReference type="STRING" id="511145.b0083"/>
<dbReference type="PaxDb" id="511145-b0083"/>
<dbReference type="EnsemblBacteria" id="AAC73194">
    <property type="protein sequence ID" value="AAC73194"/>
    <property type="gene ID" value="b0083"/>
</dbReference>
<dbReference type="GeneID" id="93777351"/>
<dbReference type="GeneID" id="944803"/>
<dbReference type="KEGG" id="ecj:JW0081"/>
<dbReference type="KEGG" id="eco:b0083"/>
<dbReference type="KEGG" id="ecoc:C3026_00320"/>
<dbReference type="PATRIC" id="fig|1411691.4.peg.2197"/>
<dbReference type="EchoBASE" id="EB1078"/>
<dbReference type="eggNOG" id="COG3116">
    <property type="taxonomic scope" value="Bacteria"/>
</dbReference>
<dbReference type="HOGENOM" id="CLU_156524_2_0_6"/>
<dbReference type="InParanoid" id="P0AEN4"/>
<dbReference type="OMA" id="DLWHHKW"/>
<dbReference type="OrthoDB" id="6196803at2"/>
<dbReference type="PhylomeDB" id="P0AEN4"/>
<dbReference type="BioCyc" id="EcoCyc:EG11086-MONOMER"/>
<dbReference type="PRO" id="PR:P0AEN4"/>
<dbReference type="Proteomes" id="UP000000625">
    <property type="component" value="Chromosome"/>
</dbReference>
<dbReference type="GO" id="GO:0032153">
    <property type="term" value="C:cell division site"/>
    <property type="evidence" value="ECO:0000314"/>
    <property type="project" value="EcoCyc"/>
</dbReference>
<dbReference type="GO" id="GO:1990586">
    <property type="term" value="C:divisome complex"/>
    <property type="evidence" value="ECO:0000353"/>
    <property type="project" value="ComplexPortal"/>
</dbReference>
<dbReference type="GO" id="GO:1990588">
    <property type="term" value="C:FtsBL complex"/>
    <property type="evidence" value="ECO:0000303"/>
    <property type="project" value="ComplexPortal"/>
</dbReference>
<dbReference type="GO" id="GO:1990587">
    <property type="term" value="C:FtsQBL complex"/>
    <property type="evidence" value="ECO:0000353"/>
    <property type="project" value="ComplexPortal"/>
</dbReference>
<dbReference type="GO" id="GO:0005886">
    <property type="term" value="C:plasma membrane"/>
    <property type="evidence" value="ECO:0000314"/>
    <property type="project" value="EcoCyc"/>
</dbReference>
<dbReference type="GO" id="GO:0051301">
    <property type="term" value="P:cell division"/>
    <property type="evidence" value="ECO:0000303"/>
    <property type="project" value="ComplexPortal"/>
</dbReference>
<dbReference type="GO" id="GO:0000917">
    <property type="term" value="P:division septum assembly"/>
    <property type="evidence" value="ECO:0000303"/>
    <property type="project" value="ComplexPortal"/>
</dbReference>
<dbReference type="GO" id="GO:0043093">
    <property type="term" value="P:FtsZ-dependent cytokinesis"/>
    <property type="evidence" value="ECO:0000315"/>
    <property type="project" value="EcoCyc"/>
</dbReference>
<dbReference type="HAMAP" id="MF_00910">
    <property type="entry name" value="FtsL"/>
    <property type="match status" value="1"/>
</dbReference>
<dbReference type="InterPro" id="IPR011922">
    <property type="entry name" value="Cell_div_FtsL"/>
</dbReference>
<dbReference type="NCBIfam" id="TIGR02209">
    <property type="entry name" value="ftsL_broad"/>
    <property type="match status" value="1"/>
</dbReference>
<dbReference type="NCBIfam" id="NF008040">
    <property type="entry name" value="PRK10772.1"/>
    <property type="match status" value="1"/>
</dbReference>
<dbReference type="PANTHER" id="PTHR37479">
    <property type="entry name" value="CELL DIVISION PROTEIN FTSL"/>
    <property type="match status" value="1"/>
</dbReference>
<dbReference type="PANTHER" id="PTHR37479:SF1">
    <property type="entry name" value="CELL DIVISION PROTEIN FTSL"/>
    <property type="match status" value="1"/>
</dbReference>
<dbReference type="Pfam" id="PF04999">
    <property type="entry name" value="FtsL"/>
    <property type="match status" value="1"/>
</dbReference>
<feature type="chain" id="PRO_0000087371" description="Cell division protein FtsL">
    <location>
        <begin position="1"/>
        <end position="121"/>
    </location>
</feature>
<feature type="topological domain" description="Cytoplasmic" evidence="2">
    <location>
        <begin position="1"/>
        <end position="34"/>
    </location>
</feature>
<feature type="transmembrane region" description="Helical" evidence="2">
    <location>
        <begin position="35"/>
        <end position="57"/>
    </location>
</feature>
<feature type="topological domain" description="Periplasmic" evidence="2">
    <location>
        <begin position="58"/>
        <end position="121"/>
    </location>
</feature>
<feature type="coiled-coil region" evidence="1">
    <location>
        <begin position="63"/>
        <end position="91"/>
    </location>
</feature>
<feature type="short sequence motif" description="Leucine zipper-like">
    <location>
        <begin position="58"/>
        <end position="85"/>
    </location>
</feature>
<feature type="mutagenesis site" description="Impairs both localization and function, and reduces the efficiency of dimerization." evidence="4">
    <original>L</original>
    <variation>H</variation>
    <location>
        <position position="70"/>
    </location>
</feature>
<feature type="mutagenesis site" description="Impairs both localization and function, and reduces the efficiency of dimerization." evidence="4">
    <original>L</original>
    <variation>D</variation>
    <location>
        <position position="84"/>
    </location>
</feature>
<feature type="helix" evidence="14">
    <location>
        <begin position="43"/>
        <end position="91"/>
    </location>
</feature>
<feature type="helix" evidence="14">
    <location>
        <begin position="94"/>
        <end position="101"/>
    </location>
</feature>
<feature type="helix" evidence="14">
    <location>
        <begin position="102"/>
        <end position="104"/>
    </location>
</feature>
<feature type="strand" evidence="15">
    <location>
        <begin position="111"/>
        <end position="113"/>
    </location>
</feature>
<feature type="strand" evidence="14">
    <location>
        <begin position="114"/>
        <end position="118"/>
    </location>
</feature>
<gene>
    <name evidence="2" type="primary">ftsL</name>
    <name type="synonym">mraR</name>
    <name type="synonym">yabD</name>
    <name type="ordered locus">b0083</name>
    <name type="ordered locus">JW0081</name>
</gene>
<sequence length="121" mass="13627">MISRVTEALSKVKGSMGSHERHALPGVIGDDLLRFGKLPLCLFICIILTAVTVVTTAHHTRLLTAQREQLVLERDALDIEWRNLILEENALGDHSRVERIATEKLQMQHVDPSQENIVVQK</sequence>
<comment type="function">
    <text evidence="2 4 10 12">Essential cell division protein. May link together the upstream cell division proteins, which are predominantly cytoplasmic, with the downstream cell division proteins, which are predominantly periplasmic. Can also mediate Zn(2+)-sensitivity probably by increasing the permeability of the inner membrane.</text>
</comment>
<comment type="subunit">
    <text evidence="2 4 8 9 10 11">Part of a complex composed of FtsB, FtsL and FtsQ. The complex can be formed before its localization to the division site. This tripartite complex can be divided further into a subcomplex of FtsB and FtsL, which forms in the absence of FtsQ. Also interacts with FtsI, FtsN and YmgF. Homodimer in vitro. May form multimers.</text>
</comment>
<comment type="interaction">
    <interactant intactId="EBI-1119082">
        <id>P0AEN4</id>
    </interactant>
    <interactant intactId="EBI-6419495">
        <id>P56976</id>
        <label>blr</label>
    </interactant>
    <organismsDiffer>false</organismsDiffer>
    <experiments>3</experiments>
</comment>
<comment type="interaction">
    <interactant intactId="EBI-1119082">
        <id>P0AEN4</id>
    </interactant>
    <interactant intactId="EBI-1113953">
        <id>P0A6S5</id>
        <label>ftsB</label>
    </interactant>
    <organismsDiffer>false</organismsDiffer>
    <experiments>18</experiments>
</comment>
<comment type="interaction">
    <interactant intactId="EBI-1119082">
        <id>P0AEN4</id>
    </interactant>
    <interactant intactId="EBI-548564">
        <id>P0AD68</id>
        <label>ftsI</label>
    </interactant>
    <organismsDiffer>false</organismsDiffer>
    <experiments>4</experiments>
</comment>
<comment type="interaction">
    <interactant intactId="EBI-1119082">
        <id>P0AEN4</id>
    </interactant>
    <interactant intactId="EBI-1130157">
        <id>P06136</id>
        <label>ftsQ</label>
    </interactant>
    <organismsDiffer>false</organismsDiffer>
    <experiments>12</experiments>
</comment>
<comment type="interaction">
    <interactant intactId="EBI-1119082">
        <id>P0AEN4</id>
    </interactant>
    <interactant intactId="EBI-1214577">
        <id>P58034</id>
        <label>ymgF</label>
    </interactant>
    <organismsDiffer>false</organismsDiffer>
    <experiments>3</experiments>
</comment>
<comment type="subcellular location">
    <subcellularLocation>
        <location evidence="2 3 5 6 7 8">Cell inner membrane</location>
        <topology evidence="2 3 5 6 7 8">Single-pass type II membrane protein</topology>
    </subcellularLocation>
    <text>Localizes to the division septum where it forms a ring structure. Localization requires FtsZ, FtsA, ZipA, FtsK, FtsQ and FtsB, but not FtsI and FtsN. Localization of FtsB and FtsL is codependent.</text>
</comment>
<comment type="domain">
    <text evidence="11 13">The cytoplasmic region is involved in recruitment of the downstream cell division protein FtsW. The transmembrane segment and the membrane-proximal periplasmic region form a coiled-coil structure and are required for septal localization and interaction with FtsB. The C-terminal region is required for interaction with FtsQ. Contains a leucine zipper-like (LZ) motif, which is required for optimal interaction with FtsB.</text>
</comment>
<comment type="disruption phenotype">
    <text evidence="7">Mutants show inhibition of cell division, formation of long, nonseptate filaments, ultimate cessation of growth and lysis.</text>
</comment>
<comment type="similarity">
    <text evidence="2">Belongs to the FtsL family.</text>
</comment>
<organism>
    <name type="scientific">Escherichia coli (strain K12)</name>
    <dbReference type="NCBI Taxonomy" id="83333"/>
    <lineage>
        <taxon>Bacteria</taxon>
        <taxon>Pseudomonadati</taxon>
        <taxon>Pseudomonadota</taxon>
        <taxon>Gammaproteobacteria</taxon>
        <taxon>Enterobacterales</taxon>
        <taxon>Enterobacteriaceae</taxon>
        <taxon>Escherichia</taxon>
    </lineage>
</organism>